<dbReference type="EC" id="1.-.-.-" evidence="9"/>
<dbReference type="EMBL" id="MT586757">
    <property type="protein sequence ID" value="QOG08949.1"/>
    <property type="molecule type" value="Genomic_DNA"/>
</dbReference>
<dbReference type="SMR" id="A0A7L8UYL4"/>
<dbReference type="GlyCosmos" id="A0A7L8UYL4">
    <property type="glycosylation" value="10 sites, No reported glycans"/>
</dbReference>
<dbReference type="GO" id="GO:0071949">
    <property type="term" value="F:FAD binding"/>
    <property type="evidence" value="ECO:0007669"/>
    <property type="project" value="InterPro"/>
</dbReference>
<dbReference type="GO" id="GO:0016491">
    <property type="term" value="F:oxidoreductase activity"/>
    <property type="evidence" value="ECO:0007669"/>
    <property type="project" value="UniProtKB-KW"/>
</dbReference>
<dbReference type="Gene3D" id="3.30.465.10">
    <property type="match status" value="2"/>
</dbReference>
<dbReference type="InterPro" id="IPR012951">
    <property type="entry name" value="BBE"/>
</dbReference>
<dbReference type="InterPro" id="IPR016166">
    <property type="entry name" value="FAD-bd_PCMH"/>
</dbReference>
<dbReference type="InterPro" id="IPR036318">
    <property type="entry name" value="FAD-bd_PCMH-like_sf"/>
</dbReference>
<dbReference type="InterPro" id="IPR016169">
    <property type="entry name" value="FAD-bd_PCMH_sub2"/>
</dbReference>
<dbReference type="InterPro" id="IPR050432">
    <property type="entry name" value="FAD-linked_Oxidoreductases_BP"/>
</dbReference>
<dbReference type="InterPro" id="IPR006094">
    <property type="entry name" value="Oxid_FAD_bind_N"/>
</dbReference>
<dbReference type="PANTHER" id="PTHR13878:SF91">
    <property type="entry name" value="FAD BINDING DOMAIN PROTEIN (AFU_ORTHOLOGUE AFUA_6G12070)-RELATED"/>
    <property type="match status" value="1"/>
</dbReference>
<dbReference type="PANTHER" id="PTHR13878">
    <property type="entry name" value="GULONOLACTONE OXIDASE"/>
    <property type="match status" value="1"/>
</dbReference>
<dbReference type="Pfam" id="PF08031">
    <property type="entry name" value="BBE"/>
    <property type="match status" value="1"/>
</dbReference>
<dbReference type="Pfam" id="PF01565">
    <property type="entry name" value="FAD_binding_4"/>
    <property type="match status" value="1"/>
</dbReference>
<dbReference type="SUPFAM" id="SSF56176">
    <property type="entry name" value="FAD-binding/transporter-associated domain-like"/>
    <property type="match status" value="1"/>
</dbReference>
<dbReference type="PROSITE" id="PS51387">
    <property type="entry name" value="FAD_PCMH"/>
    <property type="match status" value="1"/>
</dbReference>
<comment type="function">
    <text evidence="1 6 9">FAD-linked oxidoreductase; part of the gene cluster that mediates the biosynthesis of the cytotoxic leucine-containing cytochalasans, including aspochalasin C, aspochalasin E, TMC-169, flavichalasine F, aspergillin PZ, aspochalasin M and flavichalasine G (PubMed:32913332). The first step in the pathway is catalyzed by the hybrid PKS-NRPS ffsA that utilizes 8 units of malonyl-CoA to iteratively assemble the octaketide chain before addition of L-leucine by the C-terminal NRPS modules (PubMed:32913332). Because ffsA lacks a designated enoylreductase (ER) domain, the required activity is provided the enoyl reductase fssC (Probable). The methyltransferase (MT) domain of ffsA catalyzes the alpha-methylation at C10 and C14 using S-adenosyl-L-methionine as the methyl-donating cosubstrate (Probable). Reduction by the hydrolyase ffsE, followed by dehydration and intra-molecular Diels-Alder cyclization by the Diels-Alderase ffsF then yield the required isoindolone-fused macrocycle (By similarity). A number of oxidative steps catalyzed by the tailoring cytochrome P450 monooxygenase ffsD, the FAD-linked oxidoreductase ffsJ and the short-chain dehydrogenase/reductase ffsI, are further required to afford the final products (Probable).</text>
</comment>
<comment type="cofactor">
    <cofactor evidence="8">
        <name>FAD</name>
        <dbReference type="ChEBI" id="CHEBI:57692"/>
    </cofactor>
</comment>
<comment type="pathway">
    <text evidence="9">Mycotoxin biosynthesis.</text>
</comment>
<comment type="similarity">
    <text evidence="8">Belongs to the oxygen-dependent FAD-linked oxidoreductase family.</text>
</comment>
<organism>
    <name type="scientific">Aspergillus flavipes</name>
    <dbReference type="NCBI Taxonomy" id="41900"/>
    <lineage>
        <taxon>Eukaryota</taxon>
        <taxon>Fungi</taxon>
        <taxon>Dikarya</taxon>
        <taxon>Ascomycota</taxon>
        <taxon>Pezizomycotina</taxon>
        <taxon>Eurotiomycetes</taxon>
        <taxon>Eurotiomycetidae</taxon>
        <taxon>Eurotiales</taxon>
        <taxon>Aspergillaceae</taxon>
        <taxon>Aspergillus</taxon>
        <taxon>Aspergillus subgen. Circumdati</taxon>
    </lineage>
</organism>
<reference key="1">
    <citation type="journal article" date="2020" name="J. Antibiot.">
        <title>Discovery and characterization of a cytochalasan biosynthetic cluster from the marine-derived fungus Aspergillus flavipes CNL-338.</title>
        <authorList>
            <person name="Heard S.C."/>
            <person name="Wu G."/>
            <person name="Winter J.M."/>
        </authorList>
    </citation>
    <scope>NUCLEOTIDE SEQUENCE [GENOMIC DNA]</scope>
    <scope>FUNCTION</scope>
    <scope>PATHWAY</scope>
    <source>
        <strain>CNL-338</strain>
    </source>
</reference>
<sequence length="614" mass="65433">MRLTRALTPAILALPAAHAAASLQDWQSLNTTLDHRLHAVTPLALPCFSIYNNHSHAPNEDACLNIQDHYTNASYRVDQVSAYVFSQSETCSPIPSQQCELDPSDPSNPAAYTNISCNTGSLPAYYIDVQHASDVTAAFHFAAKTNTAISIKNSGHDYNGRSSGPGSLSLRTRTLRSTTYHPSFTPASCKTPTGKAVTLGAGVNFHEVYTFAHENKVTFVGGSGPTVGASGGWVLTGGHGVLSRAYGLGIDRVVEFELVTPDGEHRIANACQNADLFWALRGGGGSTFGVVLSSTHRVEPEAPLSLAYLALPPNASSSTSAAFLDLLVNYTLPWAEDAWGGFGNAAATILATPLLSLPEAKTSMATAIDFVTAHGGTGYVETLSSFYEMYTKYIVPSASAVGSVRFNHNWIIPNSLFATASGQKKLRKHLDWMGSVGLVPGLLETTPYLYSGNGHGRSNNNNSNNSSTSTSTSTSSKNGSVKPYAYGGKETTSSTPAWRNSAAVLIAEVGWAFNATLSEKKALAKTLVEASERVRELAPGSGAYANEAHPWVEDWQDAFWGGNYRRLADLKKKWDPKGLLGCWHCVGSEGEGKKETGTAWRAEVVGGKCLGRLI</sequence>
<keyword id="KW-0274">FAD</keyword>
<keyword id="KW-0285">Flavoprotein</keyword>
<keyword id="KW-0325">Glycoprotein</keyword>
<keyword id="KW-0560">Oxidoreductase</keyword>
<keyword id="KW-0732">Signal</keyword>
<feature type="signal peptide" evidence="2">
    <location>
        <begin position="1"/>
        <end position="19"/>
    </location>
</feature>
<feature type="chain" id="PRO_5029887681" description="FAD-linked oxidoreductase ffsJ">
    <location>
        <begin position="20"/>
        <end position="614"/>
    </location>
</feature>
<feature type="domain" description="FAD-binding PCMH-type" evidence="4">
    <location>
        <begin position="119"/>
        <end position="301"/>
    </location>
</feature>
<feature type="region of interest" description="Disordered" evidence="5">
    <location>
        <begin position="453"/>
        <end position="495"/>
    </location>
</feature>
<feature type="compositionally biased region" description="Low complexity" evidence="5">
    <location>
        <begin position="456"/>
        <end position="480"/>
    </location>
</feature>
<feature type="glycosylation site" description="N-linked (GlcNAc...) asparagine" evidence="3">
    <location>
        <position position="30"/>
    </location>
</feature>
<feature type="glycosylation site" description="N-linked (GlcNAc...) asparagine" evidence="3">
    <location>
        <position position="53"/>
    </location>
</feature>
<feature type="glycosylation site" description="N-linked (GlcNAc...) asparagine" evidence="3">
    <location>
        <position position="72"/>
    </location>
</feature>
<feature type="glycosylation site" description="N-linked (GlcNAc...) asparagine" evidence="3">
    <location>
        <position position="114"/>
    </location>
</feature>
<feature type="glycosylation site" description="N-linked (GlcNAc...) asparagine" evidence="3">
    <location>
        <position position="314"/>
    </location>
</feature>
<feature type="glycosylation site" description="N-linked (GlcNAc...) asparagine" evidence="3">
    <location>
        <position position="329"/>
    </location>
</feature>
<feature type="glycosylation site" description="N-linked (GlcNAc...) asparagine" evidence="3">
    <location>
        <position position="461"/>
    </location>
</feature>
<feature type="glycosylation site" description="N-linked (GlcNAc...) asparagine" evidence="3">
    <location>
        <position position="465"/>
    </location>
</feature>
<feature type="glycosylation site" description="N-linked (GlcNAc...) asparagine" evidence="3">
    <location>
        <position position="478"/>
    </location>
</feature>
<feature type="glycosylation site" description="N-linked (GlcNAc...) asparagine" evidence="3">
    <location>
        <position position="514"/>
    </location>
</feature>
<gene>
    <name evidence="7" type="primary">ffsJ</name>
</gene>
<accession>A0A7L8UYL4</accession>
<name>FFSJ_ASPFV</name>
<protein>
    <recommendedName>
        <fullName evidence="7">FAD-linked oxidoreductase ffsJ</fullName>
        <ecNumber evidence="9">1.-.-.-</ecNumber>
    </recommendedName>
    <alternativeName>
        <fullName evidence="7">Cytochalasans biosynthesis cluster protein ffsJ</fullName>
    </alternativeName>
</protein>
<proteinExistence type="inferred from homology"/>
<evidence type="ECO:0000250" key="1">
    <source>
        <dbReference type="UniProtKB" id="Q0V6Q5"/>
    </source>
</evidence>
<evidence type="ECO:0000255" key="2"/>
<evidence type="ECO:0000255" key="3">
    <source>
        <dbReference type="PROSITE-ProRule" id="PRU00498"/>
    </source>
</evidence>
<evidence type="ECO:0000255" key="4">
    <source>
        <dbReference type="PROSITE-ProRule" id="PRU00718"/>
    </source>
</evidence>
<evidence type="ECO:0000256" key="5">
    <source>
        <dbReference type="SAM" id="MobiDB-lite"/>
    </source>
</evidence>
<evidence type="ECO:0000269" key="6">
    <source>
    </source>
</evidence>
<evidence type="ECO:0000303" key="7">
    <source>
    </source>
</evidence>
<evidence type="ECO:0000305" key="8"/>
<evidence type="ECO:0000305" key="9">
    <source>
    </source>
</evidence>